<protein>
    <recommendedName>
        <fullName evidence="2">Elongation factor 1-alpha</fullName>
        <shortName evidence="2">EF-1-alpha</shortName>
        <ecNumber evidence="2">3.6.5.3</ecNumber>
    </recommendedName>
    <alternativeName>
        <fullName evidence="2">Elongation factor Tu</fullName>
        <shortName evidence="2">EF-Tu</shortName>
    </alternativeName>
</protein>
<comment type="function">
    <text evidence="2">GTP hydrolase that promotes the GTP-dependent binding of aminoacyl-tRNA to the A-site of ribosomes during protein biosynthesis.</text>
</comment>
<comment type="catalytic activity">
    <reaction evidence="2">
        <text>GTP + H2O = GDP + phosphate + H(+)</text>
        <dbReference type="Rhea" id="RHEA:19669"/>
        <dbReference type="ChEBI" id="CHEBI:15377"/>
        <dbReference type="ChEBI" id="CHEBI:15378"/>
        <dbReference type="ChEBI" id="CHEBI:37565"/>
        <dbReference type="ChEBI" id="CHEBI:43474"/>
        <dbReference type="ChEBI" id="CHEBI:58189"/>
        <dbReference type="EC" id="3.6.5.3"/>
    </reaction>
    <physiologicalReaction direction="left-to-right" evidence="2">
        <dbReference type="Rhea" id="RHEA:19670"/>
    </physiologicalReaction>
</comment>
<comment type="subcellular location">
    <subcellularLocation>
        <location evidence="2">Cytoplasm</location>
    </subcellularLocation>
</comment>
<comment type="similarity">
    <text evidence="2">Belongs to the TRAFAC class translation factor GTPase superfamily. Classic translation factor GTPase family. EF-Tu/EF-1A subfamily.</text>
</comment>
<accession>Q464Z4</accession>
<proteinExistence type="inferred from homology"/>
<keyword id="KW-0963">Cytoplasm</keyword>
<keyword id="KW-0251">Elongation factor</keyword>
<keyword id="KW-0342">GTP-binding</keyword>
<keyword id="KW-0378">Hydrolase</keyword>
<keyword id="KW-0460">Magnesium</keyword>
<keyword id="KW-0479">Metal-binding</keyword>
<keyword id="KW-0547">Nucleotide-binding</keyword>
<keyword id="KW-0648">Protein biosynthesis</keyword>
<dbReference type="EC" id="3.6.5.3" evidence="2"/>
<dbReference type="EMBL" id="CP000099">
    <property type="protein sequence ID" value="AAZ72548.1"/>
    <property type="molecule type" value="Genomic_DNA"/>
</dbReference>
<dbReference type="SMR" id="Q464Z4"/>
<dbReference type="STRING" id="269797.Mbar_A3685"/>
<dbReference type="PaxDb" id="269797-Mbar_A3685"/>
<dbReference type="KEGG" id="mba:Mbar_A3685"/>
<dbReference type="eggNOG" id="arCOG01561">
    <property type="taxonomic scope" value="Archaea"/>
</dbReference>
<dbReference type="HOGENOM" id="CLU_007265_3_5_2"/>
<dbReference type="OrthoDB" id="371718at2157"/>
<dbReference type="GO" id="GO:0005737">
    <property type="term" value="C:cytoplasm"/>
    <property type="evidence" value="ECO:0007669"/>
    <property type="project" value="UniProtKB-SubCell"/>
</dbReference>
<dbReference type="GO" id="GO:0005525">
    <property type="term" value="F:GTP binding"/>
    <property type="evidence" value="ECO:0007669"/>
    <property type="project" value="UniProtKB-UniRule"/>
</dbReference>
<dbReference type="GO" id="GO:0003924">
    <property type="term" value="F:GTPase activity"/>
    <property type="evidence" value="ECO:0007669"/>
    <property type="project" value="InterPro"/>
</dbReference>
<dbReference type="GO" id="GO:0003746">
    <property type="term" value="F:translation elongation factor activity"/>
    <property type="evidence" value="ECO:0007669"/>
    <property type="project" value="UniProtKB-UniRule"/>
</dbReference>
<dbReference type="CDD" id="cd01883">
    <property type="entry name" value="EF1_alpha"/>
    <property type="match status" value="1"/>
</dbReference>
<dbReference type="CDD" id="cd03693">
    <property type="entry name" value="EF1_alpha_II"/>
    <property type="match status" value="1"/>
</dbReference>
<dbReference type="CDD" id="cd03705">
    <property type="entry name" value="EF1_alpha_III"/>
    <property type="match status" value="1"/>
</dbReference>
<dbReference type="FunFam" id="2.40.30.10:FF:000003">
    <property type="entry name" value="Elongation factor 1-alpha"/>
    <property type="match status" value="1"/>
</dbReference>
<dbReference type="FunFam" id="2.40.30.10:FF:000005">
    <property type="entry name" value="Elongation factor 1-alpha"/>
    <property type="match status" value="1"/>
</dbReference>
<dbReference type="FunFam" id="3.40.50.300:FF:000204">
    <property type="entry name" value="Translation elongation factor Tu"/>
    <property type="match status" value="1"/>
</dbReference>
<dbReference type="Gene3D" id="3.40.50.300">
    <property type="entry name" value="P-loop containing nucleotide triphosphate hydrolases"/>
    <property type="match status" value="1"/>
</dbReference>
<dbReference type="Gene3D" id="2.40.30.10">
    <property type="entry name" value="Translation factors"/>
    <property type="match status" value="2"/>
</dbReference>
<dbReference type="HAMAP" id="MF_00118_A">
    <property type="entry name" value="EF_Tu_A"/>
    <property type="match status" value="1"/>
</dbReference>
<dbReference type="InterPro" id="IPR004161">
    <property type="entry name" value="EFTu-like_2"/>
</dbReference>
<dbReference type="InterPro" id="IPR031157">
    <property type="entry name" value="G_TR_CS"/>
</dbReference>
<dbReference type="InterPro" id="IPR054696">
    <property type="entry name" value="GTP-eEF1A_C"/>
</dbReference>
<dbReference type="InterPro" id="IPR027417">
    <property type="entry name" value="P-loop_NTPase"/>
</dbReference>
<dbReference type="InterPro" id="IPR005225">
    <property type="entry name" value="Small_GTP-bd"/>
</dbReference>
<dbReference type="InterPro" id="IPR000795">
    <property type="entry name" value="T_Tr_GTP-bd_dom"/>
</dbReference>
<dbReference type="InterPro" id="IPR050100">
    <property type="entry name" value="TRAFAC_GTPase_members"/>
</dbReference>
<dbReference type="InterPro" id="IPR009000">
    <property type="entry name" value="Transl_B-barrel_sf"/>
</dbReference>
<dbReference type="InterPro" id="IPR009001">
    <property type="entry name" value="Transl_elong_EF1A/Init_IF2_C"/>
</dbReference>
<dbReference type="InterPro" id="IPR004539">
    <property type="entry name" value="Transl_elong_EF1A_euk/arc"/>
</dbReference>
<dbReference type="NCBIfam" id="TIGR00483">
    <property type="entry name" value="EF-1_alpha"/>
    <property type="match status" value="1"/>
</dbReference>
<dbReference type="NCBIfam" id="NF008969">
    <property type="entry name" value="PRK12317.1"/>
    <property type="match status" value="1"/>
</dbReference>
<dbReference type="NCBIfam" id="TIGR00231">
    <property type="entry name" value="small_GTP"/>
    <property type="match status" value="1"/>
</dbReference>
<dbReference type="PANTHER" id="PTHR23115">
    <property type="entry name" value="TRANSLATION FACTOR"/>
    <property type="match status" value="1"/>
</dbReference>
<dbReference type="Pfam" id="PF22594">
    <property type="entry name" value="GTP-eEF1A_C"/>
    <property type="match status" value="1"/>
</dbReference>
<dbReference type="Pfam" id="PF00009">
    <property type="entry name" value="GTP_EFTU"/>
    <property type="match status" value="1"/>
</dbReference>
<dbReference type="Pfam" id="PF03144">
    <property type="entry name" value="GTP_EFTU_D2"/>
    <property type="match status" value="1"/>
</dbReference>
<dbReference type="PRINTS" id="PR00315">
    <property type="entry name" value="ELONGATNFCT"/>
</dbReference>
<dbReference type="SUPFAM" id="SSF50465">
    <property type="entry name" value="EF-Tu/eEF-1alpha/eIF2-gamma C-terminal domain"/>
    <property type="match status" value="1"/>
</dbReference>
<dbReference type="SUPFAM" id="SSF52540">
    <property type="entry name" value="P-loop containing nucleoside triphosphate hydrolases"/>
    <property type="match status" value="1"/>
</dbReference>
<dbReference type="SUPFAM" id="SSF50447">
    <property type="entry name" value="Translation proteins"/>
    <property type="match status" value="1"/>
</dbReference>
<dbReference type="PROSITE" id="PS00301">
    <property type="entry name" value="G_TR_1"/>
    <property type="match status" value="1"/>
</dbReference>
<dbReference type="PROSITE" id="PS51722">
    <property type="entry name" value="G_TR_2"/>
    <property type="match status" value="1"/>
</dbReference>
<reference key="1">
    <citation type="journal article" date="2006" name="J. Bacteriol.">
        <title>The Methanosarcina barkeri genome: comparative analysis with Methanosarcina acetivorans and Methanosarcina mazei reveals extensive rearrangement within methanosarcinal genomes.</title>
        <authorList>
            <person name="Maeder D.L."/>
            <person name="Anderson I."/>
            <person name="Brettin T.S."/>
            <person name="Bruce D.C."/>
            <person name="Gilna P."/>
            <person name="Han C.S."/>
            <person name="Lapidus A."/>
            <person name="Metcalf W.W."/>
            <person name="Saunders E."/>
            <person name="Tapia R."/>
            <person name="Sowers K.R."/>
        </authorList>
    </citation>
    <scope>NUCLEOTIDE SEQUENCE [LARGE SCALE GENOMIC DNA]</scope>
    <source>
        <strain>Fusaro / DSM 804</strain>
    </source>
</reference>
<evidence type="ECO:0000250" key="1"/>
<evidence type="ECO:0000255" key="2">
    <source>
        <dbReference type="HAMAP-Rule" id="MF_00118"/>
    </source>
</evidence>
<name>EF1A_METBF</name>
<gene>
    <name evidence="2" type="primary">tuf</name>
    <name type="ordered locus">Mbar_A3685</name>
</gene>
<organism>
    <name type="scientific">Methanosarcina barkeri (strain Fusaro / DSM 804)</name>
    <dbReference type="NCBI Taxonomy" id="269797"/>
    <lineage>
        <taxon>Archaea</taxon>
        <taxon>Methanobacteriati</taxon>
        <taxon>Methanobacteriota</taxon>
        <taxon>Stenosarchaea group</taxon>
        <taxon>Methanomicrobia</taxon>
        <taxon>Methanosarcinales</taxon>
        <taxon>Methanosarcinaceae</taxon>
        <taxon>Methanosarcina</taxon>
    </lineage>
</organism>
<sequence length="422" mass="46157">MAADKPHMNLAVIGHIDHGKSTFVGRLMYDAGAVPAHVIEKYKEEAKQKGKESFAFAWVMDSLKEERERGITIDIAHKRFDTDKYYFTVVDCPGHRDFVKNMITGASQADAAVLVVAAPDGVMAQTKEHIFLSRTLGINQLIVAINKMDAVEYSEKRYKEVVEQVSGILKMIGFKPGDIPFVPTSAFYGDNVVNHSEKTPWYKGVTMMEALNNLKVPEKPSTLPLRIPVEDAYTISGIGTVPVGRVETGTMKKGDKVVFMPGGAAGEVKSIEMHHEEIPQALPGDNIGWNVRGIGKADVRRGDVCGHTDNPPKVADTFVGQIVVLQHPSAITAGYTPVFHAHTSQIACQLIELNKKLDPKSGQVKEENPTFLKAGDAAIVTIKPTKPMVIEPVKEIPQLGRFAIRDMGMTIAAGMCMSVKQK</sequence>
<feature type="chain" id="PRO_1000015687" description="Elongation factor 1-alpha">
    <location>
        <begin position="1"/>
        <end position="422"/>
    </location>
</feature>
<feature type="domain" description="tr-type G">
    <location>
        <begin position="5"/>
        <end position="221"/>
    </location>
</feature>
<feature type="region of interest" description="G1" evidence="1">
    <location>
        <begin position="14"/>
        <end position="21"/>
    </location>
</feature>
<feature type="region of interest" description="G2" evidence="1">
    <location>
        <begin position="70"/>
        <end position="74"/>
    </location>
</feature>
<feature type="region of interest" description="G3" evidence="1">
    <location>
        <begin position="91"/>
        <end position="94"/>
    </location>
</feature>
<feature type="region of interest" description="G4" evidence="1">
    <location>
        <begin position="146"/>
        <end position="149"/>
    </location>
</feature>
<feature type="region of interest" description="G5" evidence="1">
    <location>
        <begin position="185"/>
        <end position="187"/>
    </location>
</feature>
<feature type="binding site" evidence="2">
    <location>
        <begin position="14"/>
        <end position="21"/>
    </location>
    <ligand>
        <name>GTP</name>
        <dbReference type="ChEBI" id="CHEBI:37565"/>
    </ligand>
</feature>
<feature type="binding site" evidence="2">
    <location>
        <position position="21"/>
    </location>
    <ligand>
        <name>Mg(2+)</name>
        <dbReference type="ChEBI" id="CHEBI:18420"/>
    </ligand>
</feature>
<feature type="binding site" evidence="2">
    <location>
        <begin position="91"/>
        <end position="95"/>
    </location>
    <ligand>
        <name>GTP</name>
        <dbReference type="ChEBI" id="CHEBI:37565"/>
    </ligand>
</feature>
<feature type="binding site" evidence="2">
    <location>
        <begin position="146"/>
        <end position="149"/>
    </location>
    <ligand>
        <name>GTP</name>
        <dbReference type="ChEBI" id="CHEBI:37565"/>
    </ligand>
</feature>